<keyword id="KW-0067">ATP-binding</keyword>
<keyword id="KW-0173">Coenzyme A biosynthesis</keyword>
<keyword id="KW-0963">Cytoplasm</keyword>
<keyword id="KW-0460">Magnesium</keyword>
<keyword id="KW-0547">Nucleotide-binding</keyword>
<keyword id="KW-0548">Nucleotidyltransferase</keyword>
<keyword id="KW-0808">Transferase</keyword>
<feature type="chain" id="PRO_1000076762" description="Phosphopantetheine adenylyltransferase">
    <location>
        <begin position="1"/>
        <end position="159"/>
    </location>
</feature>
<feature type="binding site" evidence="1">
    <location>
        <position position="16"/>
    </location>
    <ligand>
        <name>ATP</name>
        <dbReference type="ChEBI" id="CHEBI:30616"/>
    </ligand>
</feature>
<feature type="binding site" evidence="1">
    <location>
        <position position="40"/>
    </location>
    <ligand>
        <name>substrate</name>
    </ligand>
</feature>
<feature type="binding site" evidence="1">
    <location>
        <position position="72"/>
    </location>
    <ligand>
        <name>substrate</name>
    </ligand>
</feature>
<feature type="binding site" evidence="1">
    <location>
        <position position="86"/>
    </location>
    <ligand>
        <name>substrate</name>
    </ligand>
</feature>
<feature type="binding site" evidence="1">
    <location>
        <begin position="87"/>
        <end position="89"/>
    </location>
    <ligand>
        <name>ATP</name>
        <dbReference type="ChEBI" id="CHEBI:30616"/>
    </ligand>
</feature>
<feature type="binding site" evidence="1">
    <location>
        <position position="97"/>
    </location>
    <ligand>
        <name>ATP</name>
        <dbReference type="ChEBI" id="CHEBI:30616"/>
    </ligand>
</feature>
<feature type="binding site" evidence="1">
    <location>
        <begin position="122"/>
        <end position="128"/>
    </location>
    <ligand>
        <name>ATP</name>
        <dbReference type="ChEBI" id="CHEBI:30616"/>
    </ligand>
</feature>
<feature type="site" description="Transition state stabilizer" evidence="1">
    <location>
        <position position="16"/>
    </location>
</feature>
<sequence>MIAIYPGRFDPVTLGHLSVARRASGFCDRLIIAVFDNPAKPGLFTAAERVDFIKQSIKDLPNVEVRSFSGLMVNFARKMGASLIIRGLRVGADFEREMEMYVMNRRLDEGIELCCLFSEPQYQYLSASLIKEIVILGGDSSGLISEHVAVALKNKLASV</sequence>
<protein>
    <recommendedName>
        <fullName evidence="1">Phosphopantetheine adenylyltransferase</fullName>
        <ecNumber evidence="1">2.7.7.3</ecNumber>
    </recommendedName>
    <alternativeName>
        <fullName evidence="1">Dephospho-CoA pyrophosphorylase</fullName>
    </alternativeName>
    <alternativeName>
        <fullName evidence="1">Pantetheine-phosphate adenylyltransferase</fullName>
        <shortName evidence="1">PPAT</shortName>
    </alternativeName>
</protein>
<comment type="function">
    <text evidence="1">Reversibly transfers an adenylyl group from ATP to 4'-phosphopantetheine, yielding dephospho-CoA (dPCoA) and pyrophosphate.</text>
</comment>
<comment type="catalytic activity">
    <reaction evidence="1">
        <text>(R)-4'-phosphopantetheine + ATP + H(+) = 3'-dephospho-CoA + diphosphate</text>
        <dbReference type="Rhea" id="RHEA:19801"/>
        <dbReference type="ChEBI" id="CHEBI:15378"/>
        <dbReference type="ChEBI" id="CHEBI:30616"/>
        <dbReference type="ChEBI" id="CHEBI:33019"/>
        <dbReference type="ChEBI" id="CHEBI:57328"/>
        <dbReference type="ChEBI" id="CHEBI:61723"/>
        <dbReference type="EC" id="2.7.7.3"/>
    </reaction>
</comment>
<comment type="cofactor">
    <cofactor evidence="1">
        <name>Mg(2+)</name>
        <dbReference type="ChEBI" id="CHEBI:18420"/>
    </cofactor>
</comment>
<comment type="pathway">
    <text evidence="1">Cofactor biosynthesis; coenzyme A biosynthesis; CoA from (R)-pantothenate: step 4/5.</text>
</comment>
<comment type="subunit">
    <text evidence="1">Homohexamer.</text>
</comment>
<comment type="subcellular location">
    <subcellularLocation>
        <location evidence="1">Cytoplasm</location>
    </subcellularLocation>
</comment>
<comment type="similarity">
    <text evidence="1">Belongs to the bacterial CoaD family.</text>
</comment>
<reference key="1">
    <citation type="submission" date="2007-05" db="EMBL/GenBank/DDBJ databases">
        <title>Complete sequence of Dehalococcoides sp. BAV1.</title>
        <authorList>
            <consortium name="US DOE Joint Genome Institute"/>
            <person name="Copeland A."/>
            <person name="Lucas S."/>
            <person name="Lapidus A."/>
            <person name="Barry K."/>
            <person name="Detter J.C."/>
            <person name="Glavina del Rio T."/>
            <person name="Hammon N."/>
            <person name="Israni S."/>
            <person name="Pitluck S."/>
            <person name="Lowry S."/>
            <person name="Clum A."/>
            <person name="Schmutz J."/>
            <person name="Larimer F."/>
            <person name="Land M."/>
            <person name="Hauser L."/>
            <person name="Kyrpides N."/>
            <person name="Kim E."/>
            <person name="Ritalahti K.M."/>
            <person name="Loeffler F."/>
            <person name="Richardson P."/>
        </authorList>
    </citation>
    <scope>NUCLEOTIDE SEQUENCE [LARGE SCALE GENOMIC DNA]</scope>
    <source>
        <strain>ATCC BAA-2100 / JCM 16839 / KCTC 5957 / BAV1</strain>
    </source>
</reference>
<accession>A5FSN4</accession>
<dbReference type="EC" id="2.7.7.3" evidence="1"/>
<dbReference type="EMBL" id="CP000688">
    <property type="protein sequence ID" value="ABQ16754.1"/>
    <property type="molecule type" value="Genomic_DNA"/>
</dbReference>
<dbReference type="SMR" id="A5FSN4"/>
<dbReference type="KEGG" id="deb:DehaBAV1_0163"/>
<dbReference type="PATRIC" id="fig|216389.18.peg.183"/>
<dbReference type="HOGENOM" id="CLU_100149_1_1_0"/>
<dbReference type="UniPathway" id="UPA00241">
    <property type="reaction ID" value="UER00355"/>
</dbReference>
<dbReference type="GO" id="GO:0005737">
    <property type="term" value="C:cytoplasm"/>
    <property type="evidence" value="ECO:0007669"/>
    <property type="project" value="UniProtKB-SubCell"/>
</dbReference>
<dbReference type="GO" id="GO:0005524">
    <property type="term" value="F:ATP binding"/>
    <property type="evidence" value="ECO:0007669"/>
    <property type="project" value="UniProtKB-KW"/>
</dbReference>
<dbReference type="GO" id="GO:0004595">
    <property type="term" value="F:pantetheine-phosphate adenylyltransferase activity"/>
    <property type="evidence" value="ECO:0007669"/>
    <property type="project" value="UniProtKB-UniRule"/>
</dbReference>
<dbReference type="GO" id="GO:0015937">
    <property type="term" value="P:coenzyme A biosynthetic process"/>
    <property type="evidence" value="ECO:0007669"/>
    <property type="project" value="UniProtKB-UniRule"/>
</dbReference>
<dbReference type="CDD" id="cd02163">
    <property type="entry name" value="PPAT"/>
    <property type="match status" value="1"/>
</dbReference>
<dbReference type="Gene3D" id="3.40.50.620">
    <property type="entry name" value="HUPs"/>
    <property type="match status" value="1"/>
</dbReference>
<dbReference type="HAMAP" id="MF_00151">
    <property type="entry name" value="PPAT_bact"/>
    <property type="match status" value="1"/>
</dbReference>
<dbReference type="InterPro" id="IPR004821">
    <property type="entry name" value="Cyt_trans-like"/>
</dbReference>
<dbReference type="InterPro" id="IPR001980">
    <property type="entry name" value="PPAT"/>
</dbReference>
<dbReference type="InterPro" id="IPR014729">
    <property type="entry name" value="Rossmann-like_a/b/a_fold"/>
</dbReference>
<dbReference type="NCBIfam" id="TIGR01510">
    <property type="entry name" value="coaD_prev_kdtB"/>
    <property type="match status" value="1"/>
</dbReference>
<dbReference type="NCBIfam" id="TIGR00125">
    <property type="entry name" value="cyt_tran_rel"/>
    <property type="match status" value="1"/>
</dbReference>
<dbReference type="PANTHER" id="PTHR21342">
    <property type="entry name" value="PHOSPHOPANTETHEINE ADENYLYLTRANSFERASE"/>
    <property type="match status" value="1"/>
</dbReference>
<dbReference type="PANTHER" id="PTHR21342:SF1">
    <property type="entry name" value="PHOSPHOPANTETHEINE ADENYLYLTRANSFERASE"/>
    <property type="match status" value="1"/>
</dbReference>
<dbReference type="Pfam" id="PF01467">
    <property type="entry name" value="CTP_transf_like"/>
    <property type="match status" value="1"/>
</dbReference>
<dbReference type="PRINTS" id="PR01020">
    <property type="entry name" value="LPSBIOSNTHSS"/>
</dbReference>
<dbReference type="SUPFAM" id="SSF52374">
    <property type="entry name" value="Nucleotidylyl transferase"/>
    <property type="match status" value="1"/>
</dbReference>
<proteinExistence type="inferred from homology"/>
<name>COAD_DEHMB</name>
<gene>
    <name evidence="1" type="primary">coaD</name>
    <name type="ordered locus">DehaBAV1_0163</name>
</gene>
<organism>
    <name type="scientific">Dehalococcoides mccartyi (strain ATCC BAA-2100 / JCM 16839 / KCTC 5957 / BAV1)</name>
    <dbReference type="NCBI Taxonomy" id="216389"/>
    <lineage>
        <taxon>Bacteria</taxon>
        <taxon>Bacillati</taxon>
        <taxon>Chloroflexota</taxon>
        <taxon>Dehalococcoidia</taxon>
        <taxon>Dehalococcoidales</taxon>
        <taxon>Dehalococcoidaceae</taxon>
        <taxon>Dehalococcoides</taxon>
    </lineage>
</organism>
<evidence type="ECO:0000255" key="1">
    <source>
        <dbReference type="HAMAP-Rule" id="MF_00151"/>
    </source>
</evidence>